<comment type="function">
    <text evidence="1">Catalyzes the isomerization between 2-isopropylmalate and 3-isopropylmalate, via the formation of 2-isopropylmaleate.</text>
</comment>
<comment type="catalytic activity">
    <reaction evidence="1">
        <text>(2R,3S)-3-isopropylmalate = (2S)-2-isopropylmalate</text>
        <dbReference type="Rhea" id="RHEA:32287"/>
        <dbReference type="ChEBI" id="CHEBI:1178"/>
        <dbReference type="ChEBI" id="CHEBI:35121"/>
        <dbReference type="EC" id="4.2.1.33"/>
    </reaction>
</comment>
<comment type="cofactor">
    <cofactor evidence="1">
        <name>[4Fe-4S] cluster</name>
        <dbReference type="ChEBI" id="CHEBI:49883"/>
    </cofactor>
    <text evidence="1">Binds 1 [4Fe-4S] cluster per subunit.</text>
</comment>
<comment type="pathway">
    <text evidence="1">Amino-acid biosynthesis; L-leucine biosynthesis; L-leucine from 3-methyl-2-oxobutanoate: step 2/4.</text>
</comment>
<comment type="subunit">
    <text evidence="1">Heterodimer of LeuC and LeuD.</text>
</comment>
<comment type="similarity">
    <text evidence="1">Belongs to the aconitase/IPM isomerase family. LeuC type 1 subfamily.</text>
</comment>
<feature type="chain" id="PRO_0000319806" description="3-isopropylmalate dehydratase large subunit">
    <location>
        <begin position="1"/>
        <end position="473"/>
    </location>
</feature>
<feature type="region of interest" description="Disordered" evidence="2">
    <location>
        <begin position="425"/>
        <end position="448"/>
    </location>
</feature>
<feature type="binding site" evidence="1">
    <location>
        <position position="354"/>
    </location>
    <ligand>
        <name>[4Fe-4S] cluster</name>
        <dbReference type="ChEBI" id="CHEBI:49883"/>
    </ligand>
</feature>
<feature type="binding site" evidence="1">
    <location>
        <position position="414"/>
    </location>
    <ligand>
        <name>[4Fe-4S] cluster</name>
        <dbReference type="ChEBI" id="CHEBI:49883"/>
    </ligand>
</feature>
<feature type="binding site" evidence="1">
    <location>
        <position position="417"/>
    </location>
    <ligand>
        <name>[4Fe-4S] cluster</name>
        <dbReference type="ChEBI" id="CHEBI:49883"/>
    </ligand>
</feature>
<keyword id="KW-0004">4Fe-4S</keyword>
<keyword id="KW-0028">Amino-acid biosynthesis</keyword>
<keyword id="KW-0100">Branched-chain amino acid biosynthesis</keyword>
<keyword id="KW-0408">Iron</keyword>
<keyword id="KW-0411">Iron-sulfur</keyword>
<keyword id="KW-0432">Leucine biosynthesis</keyword>
<keyword id="KW-0456">Lyase</keyword>
<keyword id="KW-0479">Metal-binding</keyword>
<keyword id="KW-1185">Reference proteome</keyword>
<sequence length="473" mass="50590">MSDGTGVRGRTMAEKIWEEHVVRRADGEPDLLYIDLHLIHEVTSPQAFDGLRLAGRRVRRPDLTIATEDHNVPTTDIDKPIADPVSRTQVETLRRNCAEFGIRLHPMGDREQGIVHVIGPQLGLTQPGMTIVCGDSHTSTHGAFGALAFGIGTSEVEHVLATQTLPQYKPKTMAVTVDGTLRPGVTSKDIILALIAKIGTGGGQGHVIEYRGEAIRALSMEARMTICNMSIEAGARAGMIAPDDTTFAYLEGRPHAPKGRDWEAALEYWRSLPTDPDAVFDEEVLLDAGSLSPYVTWGTNPGQGAPLDSVVPDPATFSDPIERAAAERALAYMDLQPGTPLREIRVDTVFIGSCTNGRIEDLRAAASVLQGRKVAPGVRVLVVPGSMAVKAQAEAEGLDRIFRDAGAEWRNAGCSMCLGMNPDQLAPGQRSASTSNRNFEGRQGRGGRTHLVSPLVAAATAVAGHLAAPSDLD</sequence>
<organism>
    <name type="scientific">Acidothermus cellulolyticus (strain ATCC 43068 / DSM 8971 / 11B)</name>
    <dbReference type="NCBI Taxonomy" id="351607"/>
    <lineage>
        <taxon>Bacteria</taxon>
        <taxon>Bacillati</taxon>
        <taxon>Actinomycetota</taxon>
        <taxon>Actinomycetes</taxon>
        <taxon>Acidothermales</taxon>
        <taxon>Acidothermaceae</taxon>
        <taxon>Acidothermus</taxon>
    </lineage>
</organism>
<gene>
    <name evidence="1" type="primary">leuC</name>
    <name type="ordered locus">Acel_1591</name>
</gene>
<proteinExistence type="inferred from homology"/>
<dbReference type="EC" id="4.2.1.33" evidence="1"/>
<dbReference type="EMBL" id="CP000481">
    <property type="protein sequence ID" value="ABK53363.1"/>
    <property type="molecule type" value="Genomic_DNA"/>
</dbReference>
<dbReference type="RefSeq" id="WP_011720426.1">
    <property type="nucleotide sequence ID" value="NC_008578.1"/>
</dbReference>
<dbReference type="SMR" id="A0LVA3"/>
<dbReference type="FunCoup" id="A0LVA3">
    <property type="interactions" value="243"/>
</dbReference>
<dbReference type="STRING" id="351607.Acel_1591"/>
<dbReference type="KEGG" id="ace:Acel_1591"/>
<dbReference type="eggNOG" id="COG0065">
    <property type="taxonomic scope" value="Bacteria"/>
</dbReference>
<dbReference type="HOGENOM" id="CLU_006714_3_4_11"/>
<dbReference type="InParanoid" id="A0LVA3"/>
<dbReference type="OrthoDB" id="9802769at2"/>
<dbReference type="UniPathway" id="UPA00048">
    <property type="reaction ID" value="UER00071"/>
</dbReference>
<dbReference type="Proteomes" id="UP000008221">
    <property type="component" value="Chromosome"/>
</dbReference>
<dbReference type="GO" id="GO:0003861">
    <property type="term" value="F:3-isopropylmalate dehydratase activity"/>
    <property type="evidence" value="ECO:0007669"/>
    <property type="project" value="UniProtKB-UniRule"/>
</dbReference>
<dbReference type="GO" id="GO:0051539">
    <property type="term" value="F:4 iron, 4 sulfur cluster binding"/>
    <property type="evidence" value="ECO:0007669"/>
    <property type="project" value="UniProtKB-KW"/>
</dbReference>
<dbReference type="GO" id="GO:0046872">
    <property type="term" value="F:metal ion binding"/>
    <property type="evidence" value="ECO:0007669"/>
    <property type="project" value="UniProtKB-KW"/>
</dbReference>
<dbReference type="GO" id="GO:0009098">
    <property type="term" value="P:L-leucine biosynthetic process"/>
    <property type="evidence" value="ECO:0007669"/>
    <property type="project" value="UniProtKB-UniRule"/>
</dbReference>
<dbReference type="CDD" id="cd01583">
    <property type="entry name" value="IPMI"/>
    <property type="match status" value="1"/>
</dbReference>
<dbReference type="FunFam" id="3.30.499.10:FF:000006">
    <property type="entry name" value="3-isopropylmalate dehydratase large subunit"/>
    <property type="match status" value="1"/>
</dbReference>
<dbReference type="FunFam" id="3.30.499.10:FF:000007">
    <property type="entry name" value="3-isopropylmalate dehydratase large subunit"/>
    <property type="match status" value="1"/>
</dbReference>
<dbReference type="Gene3D" id="3.30.499.10">
    <property type="entry name" value="Aconitase, domain 3"/>
    <property type="match status" value="2"/>
</dbReference>
<dbReference type="HAMAP" id="MF_01026">
    <property type="entry name" value="LeuC_type1"/>
    <property type="match status" value="1"/>
</dbReference>
<dbReference type="InterPro" id="IPR004430">
    <property type="entry name" value="3-IsopropMal_deHydase_lsu"/>
</dbReference>
<dbReference type="InterPro" id="IPR015931">
    <property type="entry name" value="Acnase/IPM_dHydase_lsu_aba_1/3"/>
</dbReference>
<dbReference type="InterPro" id="IPR001030">
    <property type="entry name" value="Acoase/IPM_deHydtase_lsu_aba"/>
</dbReference>
<dbReference type="InterPro" id="IPR018136">
    <property type="entry name" value="Aconitase_4Fe-4S_BS"/>
</dbReference>
<dbReference type="InterPro" id="IPR036008">
    <property type="entry name" value="Aconitase_4Fe-4S_dom"/>
</dbReference>
<dbReference type="InterPro" id="IPR050067">
    <property type="entry name" value="IPM_dehydratase_rel_enz"/>
</dbReference>
<dbReference type="InterPro" id="IPR033941">
    <property type="entry name" value="IPMI_cat"/>
</dbReference>
<dbReference type="NCBIfam" id="TIGR00170">
    <property type="entry name" value="leuC"/>
    <property type="match status" value="1"/>
</dbReference>
<dbReference type="NCBIfam" id="NF004016">
    <property type="entry name" value="PRK05478.1"/>
    <property type="match status" value="1"/>
</dbReference>
<dbReference type="NCBIfam" id="NF009116">
    <property type="entry name" value="PRK12466.1"/>
    <property type="match status" value="1"/>
</dbReference>
<dbReference type="PANTHER" id="PTHR43822:SF9">
    <property type="entry name" value="3-ISOPROPYLMALATE DEHYDRATASE"/>
    <property type="match status" value="1"/>
</dbReference>
<dbReference type="PANTHER" id="PTHR43822">
    <property type="entry name" value="HOMOACONITASE, MITOCHONDRIAL-RELATED"/>
    <property type="match status" value="1"/>
</dbReference>
<dbReference type="Pfam" id="PF00330">
    <property type="entry name" value="Aconitase"/>
    <property type="match status" value="1"/>
</dbReference>
<dbReference type="PRINTS" id="PR00415">
    <property type="entry name" value="ACONITASE"/>
</dbReference>
<dbReference type="SUPFAM" id="SSF53732">
    <property type="entry name" value="Aconitase iron-sulfur domain"/>
    <property type="match status" value="1"/>
</dbReference>
<dbReference type="PROSITE" id="PS00450">
    <property type="entry name" value="ACONITASE_1"/>
    <property type="match status" value="1"/>
</dbReference>
<dbReference type="PROSITE" id="PS01244">
    <property type="entry name" value="ACONITASE_2"/>
    <property type="match status" value="1"/>
</dbReference>
<name>LEUC_ACIC1</name>
<evidence type="ECO:0000255" key="1">
    <source>
        <dbReference type="HAMAP-Rule" id="MF_01026"/>
    </source>
</evidence>
<evidence type="ECO:0000256" key="2">
    <source>
        <dbReference type="SAM" id="MobiDB-lite"/>
    </source>
</evidence>
<accession>A0LVA3</accession>
<reference key="1">
    <citation type="journal article" date="2009" name="Genome Res.">
        <title>Complete genome of the cellulolytic thermophile Acidothermus cellulolyticus 11B provides insights into its ecophysiological and evolutionary adaptations.</title>
        <authorList>
            <person name="Barabote R.D."/>
            <person name="Xie G."/>
            <person name="Leu D.H."/>
            <person name="Normand P."/>
            <person name="Necsulea A."/>
            <person name="Daubin V."/>
            <person name="Medigue C."/>
            <person name="Adney W.S."/>
            <person name="Xu X.C."/>
            <person name="Lapidus A."/>
            <person name="Parales R.E."/>
            <person name="Detter C."/>
            <person name="Pujic P."/>
            <person name="Bruce D."/>
            <person name="Lavire C."/>
            <person name="Challacombe J.F."/>
            <person name="Brettin T.S."/>
            <person name="Berry A.M."/>
        </authorList>
    </citation>
    <scope>NUCLEOTIDE SEQUENCE [LARGE SCALE GENOMIC DNA]</scope>
    <source>
        <strain>ATCC 43068 / DSM 8971 / 11B</strain>
    </source>
</reference>
<protein>
    <recommendedName>
        <fullName evidence="1">3-isopropylmalate dehydratase large subunit</fullName>
        <ecNumber evidence="1">4.2.1.33</ecNumber>
    </recommendedName>
    <alternativeName>
        <fullName evidence="1">Alpha-IPM isomerase</fullName>
        <shortName evidence="1">IPMI</shortName>
    </alternativeName>
    <alternativeName>
        <fullName evidence="1">Isopropylmalate isomerase</fullName>
    </alternativeName>
</protein>